<name>ACPS_COREF</name>
<feature type="chain" id="PRO_0000175639" description="Holo-[acyl-carrier-protein] synthase">
    <location>
        <begin position="1"/>
        <end position="141"/>
    </location>
</feature>
<feature type="binding site" evidence="1">
    <location>
        <position position="7"/>
    </location>
    <ligand>
        <name>Mg(2+)</name>
        <dbReference type="ChEBI" id="CHEBI:18420"/>
    </ligand>
</feature>
<feature type="binding site" evidence="1">
    <location>
        <position position="57"/>
    </location>
    <ligand>
        <name>Mg(2+)</name>
        <dbReference type="ChEBI" id="CHEBI:18420"/>
    </ligand>
</feature>
<evidence type="ECO:0000255" key="1">
    <source>
        <dbReference type="HAMAP-Rule" id="MF_00101"/>
    </source>
</evidence>
<sequence length="141" mass="15402">MISIGTDLVHIPAFADQLAQPGSSFMDVFGAGERRLASRRAGNRNAEHLAGRWAAKEAFIKAWSQAIYGQPPVIPEEDVQWALIEVRADRWGRVALDIAPSLDTQVRESIGDYTTSLSISHDGDYATAVCVLSYAVATENR</sequence>
<gene>
    <name evidence="1" type="primary">acpS</name>
    <name type="ordered locus">CE2389</name>
</gene>
<protein>
    <recommendedName>
        <fullName evidence="1">Holo-[acyl-carrier-protein] synthase</fullName>
        <shortName evidence="1">Holo-ACP synthase</shortName>
        <ecNumber evidence="1">2.7.8.7</ecNumber>
    </recommendedName>
    <alternativeName>
        <fullName evidence="1">4'-phosphopantetheinyl transferase AcpS</fullName>
    </alternativeName>
</protein>
<reference key="1">
    <citation type="journal article" date="2003" name="Genome Res.">
        <title>Comparative complete genome sequence analysis of the amino acid replacements responsible for the thermostability of Corynebacterium efficiens.</title>
        <authorList>
            <person name="Nishio Y."/>
            <person name="Nakamura Y."/>
            <person name="Kawarabayasi Y."/>
            <person name="Usuda Y."/>
            <person name="Kimura E."/>
            <person name="Sugimoto S."/>
            <person name="Matsui K."/>
            <person name="Yamagishi A."/>
            <person name="Kikuchi H."/>
            <person name="Ikeo K."/>
            <person name="Gojobori T."/>
        </authorList>
    </citation>
    <scope>NUCLEOTIDE SEQUENCE [LARGE SCALE GENOMIC DNA]</scope>
    <source>
        <strain>DSM 44549 / YS-314 / AJ 12310 / JCM 11189 / NBRC 100395</strain>
    </source>
</reference>
<dbReference type="EC" id="2.7.8.7" evidence="1"/>
<dbReference type="EMBL" id="BA000035">
    <property type="protein sequence ID" value="BAC19199.1"/>
    <property type="molecule type" value="Genomic_DNA"/>
</dbReference>
<dbReference type="RefSeq" id="WP_006768394.1">
    <property type="nucleotide sequence ID" value="NC_004369.1"/>
</dbReference>
<dbReference type="SMR" id="Q8FMW0"/>
<dbReference type="STRING" id="196164.gene:10742826"/>
<dbReference type="KEGG" id="cef:CE2389"/>
<dbReference type="eggNOG" id="COG0736">
    <property type="taxonomic scope" value="Bacteria"/>
</dbReference>
<dbReference type="HOGENOM" id="CLU_089696_2_0_11"/>
<dbReference type="OrthoDB" id="517356at2"/>
<dbReference type="Proteomes" id="UP000001409">
    <property type="component" value="Chromosome"/>
</dbReference>
<dbReference type="GO" id="GO:0005737">
    <property type="term" value="C:cytoplasm"/>
    <property type="evidence" value="ECO:0007669"/>
    <property type="project" value="UniProtKB-SubCell"/>
</dbReference>
<dbReference type="GO" id="GO:0008897">
    <property type="term" value="F:holo-[acyl-carrier-protein] synthase activity"/>
    <property type="evidence" value="ECO:0007669"/>
    <property type="project" value="UniProtKB-UniRule"/>
</dbReference>
<dbReference type="GO" id="GO:0000287">
    <property type="term" value="F:magnesium ion binding"/>
    <property type="evidence" value="ECO:0007669"/>
    <property type="project" value="UniProtKB-UniRule"/>
</dbReference>
<dbReference type="GO" id="GO:0006633">
    <property type="term" value="P:fatty acid biosynthetic process"/>
    <property type="evidence" value="ECO:0007669"/>
    <property type="project" value="UniProtKB-UniRule"/>
</dbReference>
<dbReference type="Gene3D" id="3.90.470.20">
    <property type="entry name" value="4'-phosphopantetheinyl transferase domain"/>
    <property type="match status" value="1"/>
</dbReference>
<dbReference type="HAMAP" id="MF_00101">
    <property type="entry name" value="AcpS"/>
    <property type="match status" value="1"/>
</dbReference>
<dbReference type="InterPro" id="IPR008278">
    <property type="entry name" value="4-PPantetheinyl_Trfase_dom"/>
</dbReference>
<dbReference type="InterPro" id="IPR037143">
    <property type="entry name" value="4-PPantetheinyl_Trfase_dom_sf"/>
</dbReference>
<dbReference type="InterPro" id="IPR002582">
    <property type="entry name" value="ACPS"/>
</dbReference>
<dbReference type="InterPro" id="IPR004568">
    <property type="entry name" value="Ppantetheine-prot_Trfase_dom"/>
</dbReference>
<dbReference type="NCBIfam" id="TIGR00556">
    <property type="entry name" value="pantethn_trn"/>
    <property type="match status" value="1"/>
</dbReference>
<dbReference type="NCBIfam" id="NF000831">
    <property type="entry name" value="PRK00070.3-1"/>
    <property type="match status" value="1"/>
</dbReference>
<dbReference type="Pfam" id="PF01648">
    <property type="entry name" value="ACPS"/>
    <property type="match status" value="1"/>
</dbReference>
<dbReference type="SUPFAM" id="SSF56214">
    <property type="entry name" value="4'-phosphopantetheinyl transferase"/>
    <property type="match status" value="1"/>
</dbReference>
<organism>
    <name type="scientific">Corynebacterium efficiens (strain DSM 44549 / YS-314 / AJ 12310 / JCM 11189 / NBRC 100395)</name>
    <dbReference type="NCBI Taxonomy" id="196164"/>
    <lineage>
        <taxon>Bacteria</taxon>
        <taxon>Bacillati</taxon>
        <taxon>Actinomycetota</taxon>
        <taxon>Actinomycetes</taxon>
        <taxon>Mycobacteriales</taxon>
        <taxon>Corynebacteriaceae</taxon>
        <taxon>Corynebacterium</taxon>
    </lineage>
</organism>
<comment type="function">
    <text evidence="1">Transfers the 4'-phosphopantetheine moiety from coenzyme A to a Ser of acyl-carrier-protein.</text>
</comment>
<comment type="catalytic activity">
    <reaction evidence="1">
        <text>apo-[ACP] + CoA = holo-[ACP] + adenosine 3',5'-bisphosphate + H(+)</text>
        <dbReference type="Rhea" id="RHEA:12068"/>
        <dbReference type="Rhea" id="RHEA-COMP:9685"/>
        <dbReference type="Rhea" id="RHEA-COMP:9690"/>
        <dbReference type="ChEBI" id="CHEBI:15378"/>
        <dbReference type="ChEBI" id="CHEBI:29999"/>
        <dbReference type="ChEBI" id="CHEBI:57287"/>
        <dbReference type="ChEBI" id="CHEBI:58343"/>
        <dbReference type="ChEBI" id="CHEBI:64479"/>
        <dbReference type="EC" id="2.7.8.7"/>
    </reaction>
</comment>
<comment type="cofactor">
    <cofactor evidence="1">
        <name>Mg(2+)</name>
        <dbReference type="ChEBI" id="CHEBI:18420"/>
    </cofactor>
</comment>
<comment type="subcellular location">
    <subcellularLocation>
        <location evidence="1">Cytoplasm</location>
    </subcellularLocation>
</comment>
<comment type="similarity">
    <text evidence="1">Belongs to the P-Pant transferase superfamily. AcpS family.</text>
</comment>
<proteinExistence type="inferred from homology"/>
<keyword id="KW-0963">Cytoplasm</keyword>
<keyword id="KW-0275">Fatty acid biosynthesis</keyword>
<keyword id="KW-0276">Fatty acid metabolism</keyword>
<keyword id="KW-0444">Lipid biosynthesis</keyword>
<keyword id="KW-0443">Lipid metabolism</keyword>
<keyword id="KW-0460">Magnesium</keyword>
<keyword id="KW-0479">Metal-binding</keyword>
<keyword id="KW-1185">Reference proteome</keyword>
<keyword id="KW-0808">Transferase</keyword>
<accession>Q8FMW0</accession>